<evidence type="ECO:0000250" key="1"/>
<evidence type="ECO:0000250" key="2">
    <source>
        <dbReference type="UniProtKB" id="P47755"/>
    </source>
</evidence>
<evidence type="ECO:0000305" key="3"/>
<gene>
    <name type="primary">CAPZA2</name>
</gene>
<reference key="1">
    <citation type="submission" date="2006-09" db="EMBL/GenBank/DDBJ databases">
        <title>NISC comparative sequencing initiative.</title>
        <authorList>
            <person name="Antonellis A."/>
            <person name="Ayele K."/>
            <person name="Benjamin B."/>
            <person name="Blakesley R.W."/>
            <person name="Boakye A."/>
            <person name="Bouffard G.G."/>
            <person name="Brinkley C."/>
            <person name="Brooks S."/>
            <person name="Chu G."/>
            <person name="Coleman H."/>
            <person name="Engle J."/>
            <person name="Gestole M."/>
            <person name="Greene A."/>
            <person name="Guan X."/>
            <person name="Gupta J."/>
            <person name="Haghighi P."/>
            <person name="Han J."/>
            <person name="Hansen N."/>
            <person name="Ho S.-L."/>
            <person name="Hu P."/>
            <person name="Hunter G."/>
            <person name="Hurle B."/>
            <person name="Idol J.R."/>
            <person name="Kwong P."/>
            <person name="Laric P."/>
            <person name="Larson S."/>
            <person name="Lee-Lin S.-Q."/>
            <person name="Legaspi R."/>
            <person name="Madden M."/>
            <person name="Maduro Q.L."/>
            <person name="Maduro V.B."/>
            <person name="Margulies E.H."/>
            <person name="Masiello C."/>
            <person name="Maskeri B."/>
            <person name="McDowell J."/>
            <person name="Mojidi H.A."/>
            <person name="Mullikin J.C."/>
            <person name="Oestreicher J.S."/>
            <person name="Park M."/>
            <person name="Portnoy M.E."/>
            <person name="Prasad A."/>
            <person name="Puri O."/>
            <person name="Reddix-Dugue N."/>
            <person name="Schandler K."/>
            <person name="Schueler M.G."/>
            <person name="Sison C."/>
            <person name="Stantripop S."/>
            <person name="Stephen E."/>
            <person name="Taye A."/>
            <person name="Thomas J.W."/>
            <person name="Thomas P.J."/>
            <person name="Tsipouri V."/>
            <person name="Ung L."/>
            <person name="Vogt J.L."/>
            <person name="Wetherby K.D."/>
            <person name="Young A."/>
            <person name="Green E.D."/>
        </authorList>
    </citation>
    <scope>NUCLEOTIDE SEQUENCE [LARGE SCALE GENOMIC DNA]</scope>
</reference>
<name>CAZA2_DASNO</name>
<organism>
    <name type="scientific">Dasypus novemcinctus</name>
    <name type="common">Nine-banded armadillo</name>
    <dbReference type="NCBI Taxonomy" id="9361"/>
    <lineage>
        <taxon>Eukaryota</taxon>
        <taxon>Metazoa</taxon>
        <taxon>Chordata</taxon>
        <taxon>Craniata</taxon>
        <taxon>Vertebrata</taxon>
        <taxon>Euteleostomi</taxon>
        <taxon>Mammalia</taxon>
        <taxon>Eutheria</taxon>
        <taxon>Xenarthra</taxon>
        <taxon>Cingulata</taxon>
        <taxon>Dasypodidae</taxon>
        <taxon>Dasypus</taxon>
    </lineage>
</organism>
<proteinExistence type="inferred from homology"/>
<accession>Q07E47</accession>
<feature type="initiator methionine" description="Removed" evidence="2">
    <location>
        <position position="1"/>
    </location>
</feature>
<feature type="chain" id="PRO_0000260354" description="F-actin-capping protein subunit alpha-2">
    <location>
        <begin position="2"/>
        <end position="286"/>
    </location>
</feature>
<feature type="modified residue" description="N-acetylalanine" evidence="2">
    <location>
        <position position="2"/>
    </location>
</feature>
<feature type="modified residue" description="Phosphoserine" evidence="2">
    <location>
        <position position="9"/>
    </location>
</feature>
<sequence>MADLEEQLSDEEKVRIAAKFIIHAPPGEFNEVFNDVRLLLNNDNLLREGAAHAFAQYNLDQFTPVKIEGYEDQVLITEHGDLGNGKFLDPKNRICFKFDHLRKEATDPRPYEAENAIESWRTSIETALRAYVKEHYPNGVCTVYGKKIDGQQTIIACIESHQFQAKNFWNGRWRSEWKFTISPSATQVVGILKIQVHYYEDGNVQLVSHKDIQDSLTVSNEVQTAKEFIKIVEAAENEYQTAISENYQTMSDTTFKALRRQLPVTRTKIDWNKILSYKIGKEMQNA</sequence>
<protein>
    <recommendedName>
        <fullName>F-actin-capping protein subunit alpha-2</fullName>
    </recommendedName>
    <alternativeName>
        <fullName>CapZ alpha-2</fullName>
    </alternativeName>
</protein>
<comment type="function">
    <text evidence="1">F-actin-capping proteins bind in a Ca(2+)-independent manner to the fast growing ends of actin filaments (barbed end) thereby blocking the exchange of subunits at these ends. Unlike other capping proteins (such as gelsolin and severin), these proteins do not sever actin filaments (By similarity).</text>
</comment>
<comment type="subunit">
    <text evidence="1 2">Component of the F-actin capping complex, composed of a heterodimer of an alpha and a beta subunit. Component of the WASH complex, composed of F-actin-capping protein subunit alpha (CAPZA1, CAPZA2 or CAPZA3), F-actin-capping protein subunit beta (CAPZB), WASHC1, WASHC2, WASHC3, WASHC4 and WASHC5. Interacts with RCSD1/CAPZIP (By similarity). Directly interacts with CRACD; this interaction decreases binding to actin (By similarity).</text>
</comment>
<comment type="similarity">
    <text evidence="3">Belongs to the F-actin-capping protein alpha subunit family.</text>
</comment>
<dbReference type="EMBL" id="DP000181">
    <property type="protein sequence ID" value="ABI93629.1"/>
    <property type="molecule type" value="Genomic_DNA"/>
</dbReference>
<dbReference type="RefSeq" id="XP_004484951.2">
    <property type="nucleotide sequence ID" value="XM_004484894.3"/>
</dbReference>
<dbReference type="SMR" id="Q07E47"/>
<dbReference type="GeneID" id="101438046"/>
<dbReference type="OrthoDB" id="340550at2759"/>
<dbReference type="GO" id="GO:0030863">
    <property type="term" value="C:cortical cytoskeleton"/>
    <property type="evidence" value="ECO:0007669"/>
    <property type="project" value="TreeGrafter"/>
</dbReference>
<dbReference type="GO" id="GO:0008290">
    <property type="term" value="C:F-actin capping protein complex"/>
    <property type="evidence" value="ECO:0007669"/>
    <property type="project" value="InterPro"/>
</dbReference>
<dbReference type="GO" id="GO:0051015">
    <property type="term" value="F:actin filament binding"/>
    <property type="evidence" value="ECO:0007669"/>
    <property type="project" value="TreeGrafter"/>
</dbReference>
<dbReference type="GO" id="GO:0030036">
    <property type="term" value="P:actin cytoskeleton organization"/>
    <property type="evidence" value="ECO:0007669"/>
    <property type="project" value="TreeGrafter"/>
</dbReference>
<dbReference type="GO" id="GO:0051016">
    <property type="term" value="P:barbed-end actin filament capping"/>
    <property type="evidence" value="ECO:0007669"/>
    <property type="project" value="InterPro"/>
</dbReference>
<dbReference type="FunFam" id="3.30.1140.60:FF:000001">
    <property type="entry name" value="F-actin-capping protein subunit alpha"/>
    <property type="match status" value="1"/>
</dbReference>
<dbReference type="FunFam" id="3.90.1150.210:FF:000002">
    <property type="entry name" value="F-actin-capping protein subunit alpha"/>
    <property type="match status" value="1"/>
</dbReference>
<dbReference type="Gene3D" id="3.30.1140.60">
    <property type="entry name" value="F-actin capping protein, alpha subunit"/>
    <property type="match status" value="1"/>
</dbReference>
<dbReference type="Gene3D" id="3.90.1150.210">
    <property type="entry name" value="F-actin capping protein, beta subunit"/>
    <property type="match status" value="1"/>
</dbReference>
<dbReference type="InterPro" id="IPR002189">
    <property type="entry name" value="CapZ_alpha"/>
</dbReference>
<dbReference type="InterPro" id="IPR037282">
    <property type="entry name" value="CapZ_alpha/beta"/>
</dbReference>
<dbReference type="InterPro" id="IPR042276">
    <property type="entry name" value="CapZ_alpha/beta_2"/>
</dbReference>
<dbReference type="InterPro" id="IPR042489">
    <property type="entry name" value="CapZ_alpha_1"/>
</dbReference>
<dbReference type="InterPro" id="IPR017865">
    <property type="entry name" value="F-actin_cap_asu_CS"/>
</dbReference>
<dbReference type="PANTHER" id="PTHR10653">
    <property type="entry name" value="F-ACTIN-CAPPING PROTEIN SUBUNIT ALPHA"/>
    <property type="match status" value="1"/>
</dbReference>
<dbReference type="PANTHER" id="PTHR10653:SF2">
    <property type="entry name" value="F-ACTIN-CAPPING PROTEIN SUBUNIT ALPHA-2"/>
    <property type="match status" value="1"/>
</dbReference>
<dbReference type="Pfam" id="PF01267">
    <property type="entry name" value="F-actin_cap_A"/>
    <property type="match status" value="1"/>
</dbReference>
<dbReference type="PRINTS" id="PR00191">
    <property type="entry name" value="FACTINCAPA"/>
</dbReference>
<dbReference type="SUPFAM" id="SSF90096">
    <property type="entry name" value="Subunits of heterodimeric actin filament capping protein Capz"/>
    <property type="match status" value="1"/>
</dbReference>
<dbReference type="PROSITE" id="PS00748">
    <property type="entry name" value="F_ACTIN_CAPPING_A_1"/>
    <property type="match status" value="1"/>
</dbReference>
<dbReference type="PROSITE" id="PS00749">
    <property type="entry name" value="F_ACTIN_CAPPING_A_2"/>
    <property type="match status" value="1"/>
</dbReference>
<keyword id="KW-0007">Acetylation</keyword>
<keyword id="KW-0117">Actin capping</keyword>
<keyword id="KW-0009">Actin-binding</keyword>
<keyword id="KW-0597">Phosphoprotein</keyword>